<keyword id="KW-0479">Metal-binding</keyword>
<keyword id="KW-1185">Reference proteome</keyword>
<keyword id="KW-0862">Zinc</keyword>
<keyword id="KW-0863">Zinc-finger</keyword>
<protein>
    <recommendedName>
        <fullName evidence="3">RING finger protein 227</fullName>
    </recommendedName>
    <alternativeName>
        <fullName evidence="4">Long intergenic non-protein coding RNA 2581</fullName>
    </alternativeName>
</protein>
<dbReference type="EMBL" id="AC104581">
    <property type="status" value="NOT_ANNOTATED_CDS"/>
    <property type="molecule type" value="Genomic_DNA"/>
</dbReference>
<dbReference type="EMBL" id="AK095766">
    <property type="status" value="NOT_ANNOTATED_CDS"/>
    <property type="molecule type" value="mRNA"/>
</dbReference>
<dbReference type="CCDS" id="CCDS86570.1"/>
<dbReference type="RefSeq" id="NP_001345628.1">
    <property type="nucleotide sequence ID" value="NM_001358699.2"/>
</dbReference>
<dbReference type="FunCoup" id="A6NIN4">
    <property type="interactions" value="37"/>
</dbReference>
<dbReference type="iPTMnet" id="A6NIN4"/>
<dbReference type="PhosphoSitePlus" id="A6NIN4"/>
<dbReference type="BioMuta" id="-"/>
<dbReference type="BioMuta" id="ENSG00000179859"/>
<dbReference type="MassIVE" id="A6NIN4"/>
<dbReference type="PeptideAtlas" id="A6NIN4"/>
<dbReference type="Ensembl" id="ENST00000324348.9">
    <property type="protein sequence ID" value="ENSP00000490456.1"/>
    <property type="gene ID" value="ENSG00000179859.10"/>
</dbReference>
<dbReference type="GeneID" id="284023"/>
<dbReference type="MANE-Select" id="ENST00000324348.9">
    <property type="protein sequence ID" value="ENSP00000490456.1"/>
    <property type="RefSeq nucleotide sequence ID" value="NM_001358699.2"/>
    <property type="RefSeq protein sequence ID" value="NP_001345628.1"/>
</dbReference>
<dbReference type="AGR" id="HGNC:27571"/>
<dbReference type="GeneCards" id="RNF227"/>
<dbReference type="HGNC" id="HGNC:27571">
    <property type="gene designation" value="RNF227"/>
</dbReference>
<dbReference type="HPA" id="ENSG00000179859">
    <property type="expression patterns" value="Tissue enriched (skin)"/>
</dbReference>
<dbReference type="neXtProt" id="NX_A6NIN4"/>
<dbReference type="OpenTargets" id="ENSG00000179859"/>
<dbReference type="VEuPathDB" id="HostDB:ENSG00000179859"/>
<dbReference type="GeneTree" id="ENSGT00390000002475"/>
<dbReference type="InParanoid" id="A6NIN4"/>
<dbReference type="OMA" id="CPRELHC"/>
<dbReference type="OrthoDB" id="252722at2759"/>
<dbReference type="PAN-GO" id="A6NIN4">
    <property type="GO annotations" value="2 GO annotations based on evolutionary models"/>
</dbReference>
<dbReference type="PhylomeDB" id="A6NIN4"/>
<dbReference type="Pharos" id="A6NIN4">
    <property type="development level" value="Tdark"/>
</dbReference>
<dbReference type="PRO" id="PR:A6NIN4"/>
<dbReference type="Proteomes" id="UP000005640">
    <property type="component" value="Chromosome 17"/>
</dbReference>
<dbReference type="RNAct" id="A6NIN4">
    <property type="molecule type" value="protein"/>
</dbReference>
<dbReference type="Bgee" id="ENSG00000179859">
    <property type="expression patterns" value="Expressed in upper arm skin and 135 other cell types or tissues"/>
</dbReference>
<dbReference type="ExpressionAtlas" id="A6NIN4">
    <property type="expression patterns" value="baseline and differential"/>
</dbReference>
<dbReference type="GO" id="GO:0061630">
    <property type="term" value="F:ubiquitin protein ligase activity"/>
    <property type="evidence" value="ECO:0000318"/>
    <property type="project" value="GO_Central"/>
</dbReference>
<dbReference type="GO" id="GO:0008270">
    <property type="term" value="F:zinc ion binding"/>
    <property type="evidence" value="ECO:0007669"/>
    <property type="project" value="UniProtKB-KW"/>
</dbReference>
<dbReference type="GO" id="GO:0016567">
    <property type="term" value="P:protein ubiquitination"/>
    <property type="evidence" value="ECO:0000318"/>
    <property type="project" value="GO_Central"/>
</dbReference>
<dbReference type="Gene3D" id="3.30.40.10">
    <property type="entry name" value="Zinc/RING finger domain, C3HC4 (zinc finger)"/>
    <property type="match status" value="1"/>
</dbReference>
<dbReference type="InterPro" id="IPR027952">
    <property type="entry name" value="DUF4632"/>
</dbReference>
<dbReference type="InterPro" id="IPR051435">
    <property type="entry name" value="RING_finger_E3_ubiq-ligases"/>
</dbReference>
<dbReference type="InterPro" id="IPR027370">
    <property type="entry name" value="Znf-RING_euk"/>
</dbReference>
<dbReference type="InterPro" id="IPR001841">
    <property type="entry name" value="Znf_RING"/>
</dbReference>
<dbReference type="InterPro" id="IPR013083">
    <property type="entry name" value="Znf_RING/FYVE/PHD"/>
</dbReference>
<dbReference type="InterPro" id="IPR017907">
    <property type="entry name" value="Znf_RING_CS"/>
</dbReference>
<dbReference type="PANTHER" id="PTHR22791:SF14">
    <property type="entry name" value="RING FINGER PROTEIN 227"/>
    <property type="match status" value="1"/>
</dbReference>
<dbReference type="PANTHER" id="PTHR22791">
    <property type="entry name" value="RING-TYPE DOMAIN-CONTAINING PROTEIN"/>
    <property type="match status" value="1"/>
</dbReference>
<dbReference type="Pfam" id="PF15451">
    <property type="entry name" value="DUF4632"/>
    <property type="match status" value="1"/>
</dbReference>
<dbReference type="Pfam" id="PF13445">
    <property type="entry name" value="zf-RING_UBOX"/>
    <property type="match status" value="1"/>
</dbReference>
<dbReference type="SMART" id="SM00184">
    <property type="entry name" value="RING"/>
    <property type="match status" value="1"/>
</dbReference>
<dbReference type="SUPFAM" id="SSF57850">
    <property type="entry name" value="RING/U-box"/>
    <property type="match status" value="1"/>
</dbReference>
<dbReference type="PROSITE" id="PS00518">
    <property type="entry name" value="ZF_RING_1"/>
    <property type="match status" value="1"/>
</dbReference>
<dbReference type="PROSITE" id="PS50089">
    <property type="entry name" value="ZF_RING_2"/>
    <property type="match status" value="1"/>
</dbReference>
<evidence type="ECO:0000255" key="1">
    <source>
        <dbReference type="PROSITE-ProRule" id="PRU00175"/>
    </source>
</evidence>
<evidence type="ECO:0000256" key="2">
    <source>
        <dbReference type="SAM" id="MobiDB-lite"/>
    </source>
</evidence>
<evidence type="ECO:0000305" key="3"/>
<evidence type="ECO:0000312" key="4">
    <source>
        <dbReference type="HGNC" id="HGNC:27571"/>
    </source>
</evidence>
<name>RN227_HUMAN</name>
<organism>
    <name type="scientific">Homo sapiens</name>
    <name type="common">Human</name>
    <dbReference type="NCBI Taxonomy" id="9606"/>
    <lineage>
        <taxon>Eukaryota</taxon>
        <taxon>Metazoa</taxon>
        <taxon>Chordata</taxon>
        <taxon>Craniata</taxon>
        <taxon>Vertebrata</taxon>
        <taxon>Euteleostomi</taxon>
        <taxon>Mammalia</taxon>
        <taxon>Eutheria</taxon>
        <taxon>Euarchontoglires</taxon>
        <taxon>Primates</taxon>
        <taxon>Haplorrhini</taxon>
        <taxon>Catarrhini</taxon>
        <taxon>Hominidae</taxon>
        <taxon>Homo</taxon>
    </lineage>
</organism>
<proteinExistence type="evidence at transcript level"/>
<gene>
    <name evidence="4" type="primary">RNF227</name>
    <name evidence="4" type="synonym">LINC02581</name>
</gene>
<accession>A6NIN4</accession>
<accession>A0A1B0GVC2</accession>
<feature type="chain" id="PRO_0000329083" description="RING finger protein 227">
    <location>
        <begin position="1"/>
        <end position="190"/>
    </location>
</feature>
<feature type="zinc finger region" description="RING-type" evidence="1">
    <location>
        <begin position="18"/>
        <end position="81"/>
    </location>
</feature>
<feature type="region of interest" description="Disordered" evidence="2">
    <location>
        <begin position="111"/>
        <end position="145"/>
    </location>
</feature>
<feature type="compositionally biased region" description="Acidic residues" evidence="2">
    <location>
        <begin position="126"/>
        <end position="136"/>
    </location>
</feature>
<sequence length="190" mass="21006">MQLLVRVPSLPERGELDCNICYRPFNLGCRAPRRLPGTARARCGHTICTACLRELAARGDGGGAAARVVRLRRVVTCPFCRAPSQLPRGGLTEMALDSDLWSRLEEKARAKCERDEAGNPAKESSDADGEAEEEGESEKGAGPRSAGWRALRRLWDRVLGPARRWRRPLPSNVLYCAEIKDIGHLTRCTL</sequence>
<reference key="1">
    <citation type="journal article" date="2006" name="Nature">
        <title>DNA sequence of human chromosome 17 and analysis of rearrangement in the human lineage.</title>
        <authorList>
            <person name="Zody M.C."/>
            <person name="Garber M."/>
            <person name="Adams D.J."/>
            <person name="Sharpe T."/>
            <person name="Harrow J."/>
            <person name="Lupski J.R."/>
            <person name="Nicholson C."/>
            <person name="Searle S.M."/>
            <person name="Wilming L."/>
            <person name="Young S.K."/>
            <person name="Abouelleil A."/>
            <person name="Allen N.R."/>
            <person name="Bi W."/>
            <person name="Bloom T."/>
            <person name="Borowsky M.L."/>
            <person name="Bugalter B.E."/>
            <person name="Butler J."/>
            <person name="Chang J.L."/>
            <person name="Chen C.-K."/>
            <person name="Cook A."/>
            <person name="Corum B."/>
            <person name="Cuomo C.A."/>
            <person name="de Jong P.J."/>
            <person name="DeCaprio D."/>
            <person name="Dewar K."/>
            <person name="FitzGerald M."/>
            <person name="Gilbert J."/>
            <person name="Gibson R."/>
            <person name="Gnerre S."/>
            <person name="Goldstein S."/>
            <person name="Grafham D.V."/>
            <person name="Grocock R."/>
            <person name="Hafez N."/>
            <person name="Hagopian D.S."/>
            <person name="Hart E."/>
            <person name="Norman C.H."/>
            <person name="Humphray S."/>
            <person name="Jaffe D.B."/>
            <person name="Jones M."/>
            <person name="Kamal M."/>
            <person name="Khodiyar V.K."/>
            <person name="LaButti K."/>
            <person name="Laird G."/>
            <person name="Lehoczky J."/>
            <person name="Liu X."/>
            <person name="Lokyitsang T."/>
            <person name="Loveland J."/>
            <person name="Lui A."/>
            <person name="Macdonald P."/>
            <person name="Major J.E."/>
            <person name="Matthews L."/>
            <person name="Mauceli E."/>
            <person name="McCarroll S.A."/>
            <person name="Mihalev A.H."/>
            <person name="Mudge J."/>
            <person name="Nguyen C."/>
            <person name="Nicol R."/>
            <person name="O'Leary S.B."/>
            <person name="Osoegawa K."/>
            <person name="Schwartz D.C."/>
            <person name="Shaw-Smith C."/>
            <person name="Stankiewicz P."/>
            <person name="Steward C."/>
            <person name="Swarbreck D."/>
            <person name="Venkataraman V."/>
            <person name="Whittaker C.A."/>
            <person name="Yang X."/>
            <person name="Zimmer A.R."/>
            <person name="Bradley A."/>
            <person name="Hubbard T."/>
            <person name="Birren B.W."/>
            <person name="Rogers J."/>
            <person name="Lander E.S."/>
            <person name="Nusbaum C."/>
        </authorList>
    </citation>
    <scope>NUCLEOTIDE SEQUENCE [LARGE SCALE GENOMIC DNA]</scope>
</reference>
<reference key="2">
    <citation type="journal article" date="2004" name="Nat. Genet.">
        <title>Complete sequencing and characterization of 21,243 full-length human cDNAs.</title>
        <authorList>
            <person name="Ota T."/>
            <person name="Suzuki Y."/>
            <person name="Nishikawa T."/>
            <person name="Otsuki T."/>
            <person name="Sugiyama T."/>
            <person name="Irie R."/>
            <person name="Wakamatsu A."/>
            <person name="Hayashi K."/>
            <person name="Sato H."/>
            <person name="Nagai K."/>
            <person name="Kimura K."/>
            <person name="Makita H."/>
            <person name="Sekine M."/>
            <person name="Obayashi M."/>
            <person name="Nishi T."/>
            <person name="Shibahara T."/>
            <person name="Tanaka T."/>
            <person name="Ishii S."/>
            <person name="Yamamoto J."/>
            <person name="Saito K."/>
            <person name="Kawai Y."/>
            <person name="Isono Y."/>
            <person name="Nakamura Y."/>
            <person name="Nagahari K."/>
            <person name="Murakami K."/>
            <person name="Yasuda T."/>
            <person name="Iwayanagi T."/>
            <person name="Wagatsuma M."/>
            <person name="Shiratori A."/>
            <person name="Sudo H."/>
            <person name="Hosoiri T."/>
            <person name="Kaku Y."/>
            <person name="Kodaira H."/>
            <person name="Kondo H."/>
            <person name="Sugawara M."/>
            <person name="Takahashi M."/>
            <person name="Kanda K."/>
            <person name="Yokoi T."/>
            <person name="Furuya T."/>
            <person name="Kikkawa E."/>
            <person name="Omura Y."/>
            <person name="Abe K."/>
            <person name="Kamihara K."/>
            <person name="Katsuta N."/>
            <person name="Sato K."/>
            <person name="Tanikawa M."/>
            <person name="Yamazaki M."/>
            <person name="Ninomiya K."/>
            <person name="Ishibashi T."/>
            <person name="Yamashita H."/>
            <person name="Murakawa K."/>
            <person name="Fujimori K."/>
            <person name="Tanai H."/>
            <person name="Kimata M."/>
            <person name="Watanabe M."/>
            <person name="Hiraoka S."/>
            <person name="Chiba Y."/>
            <person name="Ishida S."/>
            <person name="Ono Y."/>
            <person name="Takiguchi S."/>
            <person name="Watanabe S."/>
            <person name="Yosida M."/>
            <person name="Hotuta T."/>
            <person name="Kusano J."/>
            <person name="Kanehori K."/>
            <person name="Takahashi-Fujii A."/>
            <person name="Hara H."/>
            <person name="Tanase T.-O."/>
            <person name="Nomura Y."/>
            <person name="Togiya S."/>
            <person name="Komai F."/>
            <person name="Hara R."/>
            <person name="Takeuchi K."/>
            <person name="Arita M."/>
            <person name="Imose N."/>
            <person name="Musashino K."/>
            <person name="Yuuki H."/>
            <person name="Oshima A."/>
            <person name="Sasaki N."/>
            <person name="Aotsuka S."/>
            <person name="Yoshikawa Y."/>
            <person name="Matsunawa H."/>
            <person name="Ichihara T."/>
            <person name="Shiohata N."/>
            <person name="Sano S."/>
            <person name="Moriya S."/>
            <person name="Momiyama H."/>
            <person name="Satoh N."/>
            <person name="Takami S."/>
            <person name="Terashima Y."/>
            <person name="Suzuki O."/>
            <person name="Nakagawa S."/>
            <person name="Senoh A."/>
            <person name="Mizoguchi H."/>
            <person name="Goto Y."/>
            <person name="Shimizu F."/>
            <person name="Wakebe H."/>
            <person name="Hishigaki H."/>
            <person name="Watanabe T."/>
            <person name="Sugiyama A."/>
            <person name="Takemoto M."/>
            <person name="Kawakami B."/>
            <person name="Yamazaki M."/>
            <person name="Watanabe K."/>
            <person name="Kumagai A."/>
            <person name="Itakura S."/>
            <person name="Fukuzumi Y."/>
            <person name="Fujimori Y."/>
            <person name="Komiyama M."/>
            <person name="Tashiro H."/>
            <person name="Tanigami A."/>
            <person name="Fujiwara T."/>
            <person name="Ono T."/>
            <person name="Yamada K."/>
            <person name="Fujii Y."/>
            <person name="Ozaki K."/>
            <person name="Hirao M."/>
            <person name="Ohmori Y."/>
            <person name="Kawabata A."/>
            <person name="Hikiji T."/>
            <person name="Kobatake N."/>
            <person name="Inagaki H."/>
            <person name="Ikema Y."/>
            <person name="Okamoto S."/>
            <person name="Okitani R."/>
            <person name="Kawakami T."/>
            <person name="Noguchi S."/>
            <person name="Itoh T."/>
            <person name="Shigeta K."/>
            <person name="Senba T."/>
            <person name="Matsumura K."/>
            <person name="Nakajima Y."/>
            <person name="Mizuno T."/>
            <person name="Morinaga M."/>
            <person name="Sasaki M."/>
            <person name="Togashi T."/>
            <person name="Oyama M."/>
            <person name="Hata H."/>
            <person name="Watanabe M."/>
            <person name="Komatsu T."/>
            <person name="Mizushima-Sugano J."/>
            <person name="Satoh T."/>
            <person name="Shirai Y."/>
            <person name="Takahashi Y."/>
            <person name="Nakagawa K."/>
            <person name="Okumura K."/>
            <person name="Nagase T."/>
            <person name="Nomura N."/>
            <person name="Kikuchi H."/>
            <person name="Masuho Y."/>
            <person name="Yamashita R."/>
            <person name="Nakai K."/>
            <person name="Yada T."/>
            <person name="Nakamura Y."/>
            <person name="Ohara O."/>
            <person name="Isogai T."/>
            <person name="Sugano S."/>
        </authorList>
    </citation>
    <scope>NUCLEOTIDE SEQUENCE [LARGE SCALE MRNA] OF 86-190</scope>
    <source>
        <tissue>Fetal brain</tissue>
    </source>
</reference>